<keyword id="KW-0413">Isomerase</keyword>
<keyword id="KW-1185">Reference proteome</keyword>
<keyword id="KW-0819">tRNA processing</keyword>
<accession>P45291</accession>
<reference key="1">
    <citation type="journal article" date="1995" name="Science">
        <title>Whole-genome random sequencing and assembly of Haemophilus influenzae Rd.</title>
        <authorList>
            <person name="Fleischmann R.D."/>
            <person name="Adams M.D."/>
            <person name="White O."/>
            <person name="Clayton R.A."/>
            <person name="Kirkness E.F."/>
            <person name="Kerlavage A.R."/>
            <person name="Bult C.J."/>
            <person name="Tomb J.-F."/>
            <person name="Dougherty B.A."/>
            <person name="Merrick J.M."/>
            <person name="McKenney K."/>
            <person name="Sutton G.G."/>
            <person name="FitzHugh W."/>
            <person name="Fields C.A."/>
            <person name="Gocayne J.D."/>
            <person name="Scott J.D."/>
            <person name="Shirley R."/>
            <person name="Liu L.-I."/>
            <person name="Glodek A."/>
            <person name="Kelley J.M."/>
            <person name="Weidman J.F."/>
            <person name="Phillips C.A."/>
            <person name="Spriggs T."/>
            <person name="Hedblom E."/>
            <person name="Cotton M.D."/>
            <person name="Utterback T.R."/>
            <person name="Hanna M.C."/>
            <person name="Nguyen D.T."/>
            <person name="Saudek D.M."/>
            <person name="Brandon R.C."/>
            <person name="Fine L.D."/>
            <person name="Fritchman J.L."/>
            <person name="Fuhrmann J.L."/>
            <person name="Geoghagen N.S.M."/>
            <person name="Gnehm C.L."/>
            <person name="McDonald L.A."/>
            <person name="Small K.V."/>
            <person name="Fraser C.M."/>
            <person name="Smith H.O."/>
            <person name="Venter J.C."/>
        </authorList>
    </citation>
    <scope>NUCLEOTIDE SEQUENCE [LARGE SCALE GENOMIC DNA]</scope>
    <source>
        <strain>ATCC 51907 / DSM 11121 / KW20 / Rd</strain>
    </source>
</reference>
<organism>
    <name type="scientific">Haemophilus influenzae (strain ATCC 51907 / DSM 11121 / KW20 / Rd)</name>
    <dbReference type="NCBI Taxonomy" id="71421"/>
    <lineage>
        <taxon>Bacteria</taxon>
        <taxon>Pseudomonadati</taxon>
        <taxon>Pseudomonadota</taxon>
        <taxon>Gammaproteobacteria</taxon>
        <taxon>Pasteurellales</taxon>
        <taxon>Pasteurellaceae</taxon>
        <taxon>Haemophilus</taxon>
    </lineage>
</organism>
<feature type="chain" id="PRO_0000057388" description="tRNA pseudouridine synthase A">
    <location>
        <begin position="1"/>
        <end position="269"/>
    </location>
</feature>
<feature type="active site" description="Nucleophile" evidence="1">
    <location>
        <position position="51"/>
    </location>
</feature>
<feature type="binding site" evidence="1">
    <location>
        <position position="109"/>
    </location>
    <ligand>
        <name>substrate</name>
    </ligand>
</feature>
<comment type="function">
    <text evidence="1">Formation of pseudouridine at positions 38, 39 and 40 in the anticodon stem and loop of transfer RNAs.</text>
</comment>
<comment type="catalytic activity">
    <reaction evidence="1">
        <text>uridine(38/39/40) in tRNA = pseudouridine(38/39/40) in tRNA</text>
        <dbReference type="Rhea" id="RHEA:22376"/>
        <dbReference type="Rhea" id="RHEA-COMP:10085"/>
        <dbReference type="Rhea" id="RHEA-COMP:10087"/>
        <dbReference type="ChEBI" id="CHEBI:65314"/>
        <dbReference type="ChEBI" id="CHEBI:65315"/>
        <dbReference type="EC" id="5.4.99.12"/>
    </reaction>
</comment>
<comment type="subunit">
    <text evidence="1">Homodimer.</text>
</comment>
<comment type="similarity">
    <text evidence="1">Belongs to the tRNA pseudouridine synthase TruA family.</text>
</comment>
<evidence type="ECO:0000255" key="1">
    <source>
        <dbReference type="HAMAP-Rule" id="MF_00171"/>
    </source>
</evidence>
<protein>
    <recommendedName>
        <fullName evidence="1">tRNA pseudouridine synthase A</fullName>
        <ecNumber evidence="1">5.4.99.12</ecNumber>
    </recommendedName>
    <alternativeName>
        <fullName evidence="1">tRNA pseudouridine(38-40) synthase</fullName>
    </alternativeName>
    <alternativeName>
        <fullName evidence="1">tRNA pseudouridylate synthase I</fullName>
    </alternativeName>
    <alternativeName>
        <fullName evidence="1">tRNA-uridine isomerase I</fullName>
    </alternativeName>
</protein>
<name>TRUA_HAEIN</name>
<proteinExistence type="inferred from homology"/>
<gene>
    <name evidence="1" type="primary">truA</name>
    <name type="synonym">hisT</name>
    <name type="ordered locus">HI_1644</name>
</gene>
<dbReference type="EC" id="5.4.99.12" evidence="1"/>
<dbReference type="EMBL" id="L42023">
    <property type="protein sequence ID" value="AAC23291.1"/>
    <property type="molecule type" value="Genomic_DNA"/>
</dbReference>
<dbReference type="PIR" id="F64134">
    <property type="entry name" value="F64134"/>
</dbReference>
<dbReference type="RefSeq" id="NP_439786.1">
    <property type="nucleotide sequence ID" value="NC_000907.1"/>
</dbReference>
<dbReference type="SMR" id="P45291"/>
<dbReference type="STRING" id="71421.HI_1644"/>
<dbReference type="EnsemblBacteria" id="AAC23291">
    <property type="protein sequence ID" value="AAC23291"/>
    <property type="gene ID" value="HI_1644"/>
</dbReference>
<dbReference type="KEGG" id="hin:HI_1644"/>
<dbReference type="PATRIC" id="fig|71421.8.peg.1720"/>
<dbReference type="eggNOG" id="COG0101">
    <property type="taxonomic scope" value="Bacteria"/>
</dbReference>
<dbReference type="HOGENOM" id="CLU_014673_0_2_6"/>
<dbReference type="OrthoDB" id="9811823at2"/>
<dbReference type="PhylomeDB" id="P45291"/>
<dbReference type="BioCyc" id="HINF71421:G1GJ1-1661-MONOMER"/>
<dbReference type="Proteomes" id="UP000000579">
    <property type="component" value="Chromosome"/>
</dbReference>
<dbReference type="GO" id="GO:0009982">
    <property type="term" value="F:pseudouridine synthase activity"/>
    <property type="evidence" value="ECO:0000318"/>
    <property type="project" value="GO_Central"/>
</dbReference>
<dbReference type="GO" id="GO:0003723">
    <property type="term" value="F:RNA binding"/>
    <property type="evidence" value="ECO:0007669"/>
    <property type="project" value="InterPro"/>
</dbReference>
<dbReference type="GO" id="GO:0160147">
    <property type="term" value="F:tRNA pseudouridine(38-40) synthase activity"/>
    <property type="evidence" value="ECO:0007669"/>
    <property type="project" value="UniProtKB-EC"/>
</dbReference>
<dbReference type="GO" id="GO:0031119">
    <property type="term" value="P:tRNA pseudouridine synthesis"/>
    <property type="evidence" value="ECO:0000318"/>
    <property type="project" value="GO_Central"/>
</dbReference>
<dbReference type="CDD" id="cd02570">
    <property type="entry name" value="PseudoU_synth_EcTruA"/>
    <property type="match status" value="1"/>
</dbReference>
<dbReference type="FunFam" id="3.30.70.580:FF:000001">
    <property type="entry name" value="tRNA pseudouridine synthase A"/>
    <property type="match status" value="1"/>
</dbReference>
<dbReference type="FunFam" id="3.30.70.660:FF:000001">
    <property type="entry name" value="tRNA pseudouridine synthase A"/>
    <property type="match status" value="1"/>
</dbReference>
<dbReference type="Gene3D" id="3.30.70.660">
    <property type="entry name" value="Pseudouridine synthase I, catalytic domain, C-terminal subdomain"/>
    <property type="match status" value="1"/>
</dbReference>
<dbReference type="Gene3D" id="3.30.70.580">
    <property type="entry name" value="Pseudouridine synthase I, catalytic domain, N-terminal subdomain"/>
    <property type="match status" value="1"/>
</dbReference>
<dbReference type="HAMAP" id="MF_00171">
    <property type="entry name" value="TruA"/>
    <property type="match status" value="1"/>
</dbReference>
<dbReference type="InterPro" id="IPR020103">
    <property type="entry name" value="PsdUridine_synth_cat_dom_sf"/>
</dbReference>
<dbReference type="InterPro" id="IPR001406">
    <property type="entry name" value="PsdUridine_synth_TruA"/>
</dbReference>
<dbReference type="InterPro" id="IPR020097">
    <property type="entry name" value="PsdUridine_synth_TruA_a/b_dom"/>
</dbReference>
<dbReference type="InterPro" id="IPR020095">
    <property type="entry name" value="PsdUridine_synth_TruA_C"/>
</dbReference>
<dbReference type="InterPro" id="IPR020094">
    <property type="entry name" value="TruA/RsuA/RluB/E/F_N"/>
</dbReference>
<dbReference type="NCBIfam" id="TIGR00071">
    <property type="entry name" value="hisT_truA"/>
    <property type="match status" value="1"/>
</dbReference>
<dbReference type="PANTHER" id="PTHR11142">
    <property type="entry name" value="PSEUDOURIDYLATE SYNTHASE"/>
    <property type="match status" value="1"/>
</dbReference>
<dbReference type="PANTHER" id="PTHR11142:SF0">
    <property type="entry name" value="TRNA PSEUDOURIDINE SYNTHASE-LIKE 1"/>
    <property type="match status" value="1"/>
</dbReference>
<dbReference type="Pfam" id="PF01416">
    <property type="entry name" value="PseudoU_synth_1"/>
    <property type="match status" value="2"/>
</dbReference>
<dbReference type="PIRSF" id="PIRSF001430">
    <property type="entry name" value="tRNA_psdUrid_synth"/>
    <property type="match status" value="1"/>
</dbReference>
<dbReference type="SUPFAM" id="SSF55120">
    <property type="entry name" value="Pseudouridine synthase"/>
    <property type="match status" value="1"/>
</dbReference>
<sequence>MKIALGIEYNGQNYYGWQRQEKVRSVQEELEKALSHIANEKIEIFCAGRTDSGVSGTGQVVHFETNAVRPEKAWAFGTNAHLPDDIAVSWAKQVDDEFHARFSATARRYRYILYCNKLRSAILAGGITHCHLDLDAEKMHQAGQCLLGEQDFSSFRAAQCQSHTPWRNVHHLNVSRIGKYIIVDIQANAFVHHMVRNIVGSLIEVGTGNQPIEWMQWLLEQKNRQLAAPTAKPDGLYLVDVIYPQKFDIPKRPIGPLFLEDGLLNRPLK</sequence>